<proteinExistence type="predicted"/>
<organism>
    <name type="scientific">Arabidopsis thaliana</name>
    <name type="common">Mouse-ear cress</name>
    <dbReference type="NCBI Taxonomy" id="3702"/>
    <lineage>
        <taxon>Eukaryota</taxon>
        <taxon>Viridiplantae</taxon>
        <taxon>Streptophyta</taxon>
        <taxon>Embryophyta</taxon>
        <taxon>Tracheophyta</taxon>
        <taxon>Spermatophyta</taxon>
        <taxon>Magnoliopsida</taxon>
        <taxon>eudicotyledons</taxon>
        <taxon>Gunneridae</taxon>
        <taxon>Pentapetalae</taxon>
        <taxon>rosids</taxon>
        <taxon>malvids</taxon>
        <taxon>Brassicales</taxon>
        <taxon>Brassicaceae</taxon>
        <taxon>Camelineae</taxon>
        <taxon>Arabidopsis</taxon>
    </lineage>
</organism>
<protein>
    <recommendedName>
        <fullName>Putative F-box/LRR-repeat protein At3g59230</fullName>
    </recommendedName>
</protein>
<gene>
    <name type="ordered locus">At3g59230</name>
    <name type="ORF">F25L23.90</name>
</gene>
<accession>Q9LX48</accession>
<feature type="chain" id="PRO_0000281966" description="Putative F-box/LRR-repeat protein At3g59230">
    <location>
        <begin position="1"/>
        <end position="491"/>
    </location>
</feature>
<feature type="domain" description="F-box">
    <location>
        <begin position="11"/>
        <end position="57"/>
    </location>
</feature>
<feature type="repeat" description="LRR 1">
    <location>
        <begin position="127"/>
        <end position="154"/>
    </location>
</feature>
<feature type="repeat" description="LRR 2">
    <location>
        <begin position="156"/>
        <end position="182"/>
    </location>
</feature>
<feature type="repeat" description="LRR 3">
    <location>
        <begin position="184"/>
        <end position="209"/>
    </location>
</feature>
<feature type="repeat" description="LRR 4">
    <location>
        <begin position="325"/>
        <end position="351"/>
    </location>
</feature>
<feature type="repeat" description="LRR 5">
    <location>
        <begin position="352"/>
        <end position="377"/>
    </location>
</feature>
<feature type="repeat" description="LRR 6">
    <location>
        <begin position="419"/>
        <end position="444"/>
    </location>
</feature>
<feature type="repeat" description="LRR 7">
    <location>
        <begin position="472"/>
        <end position="491"/>
    </location>
</feature>
<name>FBL66_ARATH</name>
<sequence length="491" mass="55161">MNSKKLNIGPKDIINSLPEALIYHILSFLSTKEAAITSLLSRKWRYFFAFVPNLDFDDPVRMQPDMGNQEETEIHTSFMDFVDRVLALRGNSHVNKFSLKCGNGVDGVGVTRWILNTLELSVSELDLSIASDTTYLFPSKVFVSKSLVRLRIEARNGLAFGSLVIDVGDVSLPKLKTLYLDSVELDYQIICLAKLLSGCHVLEELVMIDVVWNFWESCSASIPTLKRLTFFTEEGWNNPPPSVTFDNPALVYFEYTDTVALKYEKVNFDSLVEARLGLRVGYEESENPIQVPFGFPFPLIEYAMVGDATDLLMGIRNVQVLYLYASTVEVLTFRCKAIPIFNNLTRLTIESNTKVGWDSLPNLLKNCPNLKTLVFQGLLHKATDRCGDMCPCKPPENIHTCLSSSPVKVLEILKFGEINDKTELEQTKHFLELMPHLEQLNIYYDTSVDDNLVKVSKQLQEIPGVASAKCKVQVISDNLTLSVTLPSSSSI</sequence>
<dbReference type="EMBL" id="AL356014">
    <property type="protein sequence ID" value="CAB91593.1"/>
    <property type="molecule type" value="Genomic_DNA"/>
</dbReference>
<dbReference type="EMBL" id="CP002686">
    <property type="protein sequence ID" value="AEE79894.1"/>
    <property type="molecule type" value="Genomic_DNA"/>
</dbReference>
<dbReference type="PIR" id="T48991">
    <property type="entry name" value="T48991"/>
</dbReference>
<dbReference type="RefSeq" id="NP_191482.1">
    <property type="nucleotide sequence ID" value="NM_115785.2"/>
</dbReference>
<dbReference type="FunCoup" id="Q9LX48">
    <property type="interactions" value="43"/>
</dbReference>
<dbReference type="STRING" id="3702.Q9LX48"/>
<dbReference type="PaxDb" id="3702-AT3G59230.1"/>
<dbReference type="EnsemblPlants" id="AT3G59230.1">
    <property type="protein sequence ID" value="AT3G59230.1"/>
    <property type="gene ID" value="AT3G59230"/>
</dbReference>
<dbReference type="GeneID" id="825092"/>
<dbReference type="Gramene" id="AT3G59230.1">
    <property type="protein sequence ID" value="AT3G59230.1"/>
    <property type="gene ID" value="AT3G59230"/>
</dbReference>
<dbReference type="KEGG" id="ath:AT3G59230"/>
<dbReference type="Araport" id="AT3G59230"/>
<dbReference type="TAIR" id="AT3G59230"/>
<dbReference type="HOGENOM" id="CLU_010721_7_4_1"/>
<dbReference type="InParanoid" id="Q9LX48"/>
<dbReference type="OMA" id="NEGIFRT"/>
<dbReference type="PhylomeDB" id="Q9LX48"/>
<dbReference type="PRO" id="PR:Q9LX48"/>
<dbReference type="Proteomes" id="UP000006548">
    <property type="component" value="Chromosome 3"/>
</dbReference>
<dbReference type="ExpressionAtlas" id="Q9LX48">
    <property type="expression patterns" value="baseline"/>
</dbReference>
<dbReference type="CDD" id="cd22160">
    <property type="entry name" value="F-box_AtFBL13-like"/>
    <property type="match status" value="1"/>
</dbReference>
<dbReference type="Gene3D" id="1.20.1280.50">
    <property type="match status" value="1"/>
</dbReference>
<dbReference type="Gene3D" id="3.80.10.10">
    <property type="entry name" value="Ribonuclease Inhibitor"/>
    <property type="match status" value="1"/>
</dbReference>
<dbReference type="InterPro" id="IPR036047">
    <property type="entry name" value="F-box-like_dom_sf"/>
</dbReference>
<dbReference type="InterPro" id="IPR053781">
    <property type="entry name" value="F-box_AtFBL13-like"/>
</dbReference>
<dbReference type="InterPro" id="IPR001810">
    <property type="entry name" value="F-box_dom"/>
</dbReference>
<dbReference type="InterPro" id="IPR006566">
    <property type="entry name" value="FBD"/>
</dbReference>
<dbReference type="InterPro" id="IPR055294">
    <property type="entry name" value="FBL60-like"/>
</dbReference>
<dbReference type="InterPro" id="IPR032675">
    <property type="entry name" value="LRR_dom_sf"/>
</dbReference>
<dbReference type="InterPro" id="IPR055411">
    <property type="entry name" value="LRR_FXL15/At3g58940/PEG3-like"/>
</dbReference>
<dbReference type="PANTHER" id="PTHR31293">
    <property type="entry name" value="RNI-LIKE SUPERFAMILY PROTEIN"/>
    <property type="match status" value="1"/>
</dbReference>
<dbReference type="PANTHER" id="PTHR31293:SF16">
    <property type="entry name" value="RNI-LIKE SUPERFAMILY PROTEIN"/>
    <property type="match status" value="1"/>
</dbReference>
<dbReference type="Pfam" id="PF00646">
    <property type="entry name" value="F-box"/>
    <property type="match status" value="1"/>
</dbReference>
<dbReference type="Pfam" id="PF24758">
    <property type="entry name" value="LRR_At5g56370"/>
    <property type="match status" value="1"/>
</dbReference>
<dbReference type="SMART" id="SM00579">
    <property type="entry name" value="FBD"/>
    <property type="match status" value="1"/>
</dbReference>
<dbReference type="SMART" id="SM00256">
    <property type="entry name" value="FBOX"/>
    <property type="match status" value="1"/>
</dbReference>
<dbReference type="SUPFAM" id="SSF81383">
    <property type="entry name" value="F-box domain"/>
    <property type="match status" value="1"/>
</dbReference>
<dbReference type="SUPFAM" id="SSF52047">
    <property type="entry name" value="RNI-like"/>
    <property type="match status" value="1"/>
</dbReference>
<reference key="1">
    <citation type="journal article" date="2000" name="Nature">
        <title>Sequence and analysis of chromosome 3 of the plant Arabidopsis thaliana.</title>
        <authorList>
            <person name="Salanoubat M."/>
            <person name="Lemcke K."/>
            <person name="Rieger M."/>
            <person name="Ansorge W."/>
            <person name="Unseld M."/>
            <person name="Fartmann B."/>
            <person name="Valle G."/>
            <person name="Bloecker H."/>
            <person name="Perez-Alonso M."/>
            <person name="Obermaier B."/>
            <person name="Delseny M."/>
            <person name="Boutry M."/>
            <person name="Grivell L.A."/>
            <person name="Mache R."/>
            <person name="Puigdomenech P."/>
            <person name="De Simone V."/>
            <person name="Choisne N."/>
            <person name="Artiguenave F."/>
            <person name="Robert C."/>
            <person name="Brottier P."/>
            <person name="Wincker P."/>
            <person name="Cattolico L."/>
            <person name="Weissenbach J."/>
            <person name="Saurin W."/>
            <person name="Quetier F."/>
            <person name="Schaefer M."/>
            <person name="Mueller-Auer S."/>
            <person name="Gabel C."/>
            <person name="Fuchs M."/>
            <person name="Benes V."/>
            <person name="Wurmbach E."/>
            <person name="Drzonek H."/>
            <person name="Erfle H."/>
            <person name="Jordan N."/>
            <person name="Bangert S."/>
            <person name="Wiedelmann R."/>
            <person name="Kranz H."/>
            <person name="Voss H."/>
            <person name="Holland R."/>
            <person name="Brandt P."/>
            <person name="Nyakatura G."/>
            <person name="Vezzi A."/>
            <person name="D'Angelo M."/>
            <person name="Pallavicini A."/>
            <person name="Toppo S."/>
            <person name="Simionati B."/>
            <person name="Conrad A."/>
            <person name="Hornischer K."/>
            <person name="Kauer G."/>
            <person name="Loehnert T.-H."/>
            <person name="Nordsiek G."/>
            <person name="Reichelt J."/>
            <person name="Scharfe M."/>
            <person name="Schoen O."/>
            <person name="Bargues M."/>
            <person name="Terol J."/>
            <person name="Climent J."/>
            <person name="Navarro P."/>
            <person name="Collado C."/>
            <person name="Perez-Perez A."/>
            <person name="Ottenwaelder B."/>
            <person name="Duchemin D."/>
            <person name="Cooke R."/>
            <person name="Laudie M."/>
            <person name="Berger-Llauro C."/>
            <person name="Purnelle B."/>
            <person name="Masuy D."/>
            <person name="de Haan M."/>
            <person name="Maarse A.C."/>
            <person name="Alcaraz J.-P."/>
            <person name="Cottet A."/>
            <person name="Casacuberta E."/>
            <person name="Monfort A."/>
            <person name="Argiriou A."/>
            <person name="Flores M."/>
            <person name="Liguori R."/>
            <person name="Vitale D."/>
            <person name="Mannhaupt G."/>
            <person name="Haase D."/>
            <person name="Schoof H."/>
            <person name="Rudd S."/>
            <person name="Zaccaria P."/>
            <person name="Mewes H.-W."/>
            <person name="Mayer K.F.X."/>
            <person name="Kaul S."/>
            <person name="Town C.D."/>
            <person name="Koo H.L."/>
            <person name="Tallon L.J."/>
            <person name="Jenkins J."/>
            <person name="Rooney T."/>
            <person name="Rizzo M."/>
            <person name="Walts A."/>
            <person name="Utterback T."/>
            <person name="Fujii C.Y."/>
            <person name="Shea T.P."/>
            <person name="Creasy T.H."/>
            <person name="Haas B."/>
            <person name="Maiti R."/>
            <person name="Wu D."/>
            <person name="Peterson J."/>
            <person name="Van Aken S."/>
            <person name="Pai G."/>
            <person name="Militscher J."/>
            <person name="Sellers P."/>
            <person name="Gill J.E."/>
            <person name="Feldblyum T.V."/>
            <person name="Preuss D."/>
            <person name="Lin X."/>
            <person name="Nierman W.C."/>
            <person name="Salzberg S.L."/>
            <person name="White O."/>
            <person name="Venter J.C."/>
            <person name="Fraser C.M."/>
            <person name="Kaneko T."/>
            <person name="Nakamura Y."/>
            <person name="Sato S."/>
            <person name="Kato T."/>
            <person name="Asamizu E."/>
            <person name="Sasamoto S."/>
            <person name="Kimura T."/>
            <person name="Idesawa K."/>
            <person name="Kawashima K."/>
            <person name="Kishida Y."/>
            <person name="Kiyokawa C."/>
            <person name="Kohara M."/>
            <person name="Matsumoto M."/>
            <person name="Matsuno A."/>
            <person name="Muraki A."/>
            <person name="Nakayama S."/>
            <person name="Nakazaki N."/>
            <person name="Shinpo S."/>
            <person name="Takeuchi C."/>
            <person name="Wada T."/>
            <person name="Watanabe A."/>
            <person name="Yamada M."/>
            <person name="Yasuda M."/>
            <person name="Tabata S."/>
        </authorList>
    </citation>
    <scope>NUCLEOTIDE SEQUENCE [LARGE SCALE GENOMIC DNA]</scope>
    <source>
        <strain>cv. Columbia</strain>
    </source>
</reference>
<reference key="2">
    <citation type="journal article" date="2017" name="Plant J.">
        <title>Araport11: a complete reannotation of the Arabidopsis thaliana reference genome.</title>
        <authorList>
            <person name="Cheng C.Y."/>
            <person name="Krishnakumar V."/>
            <person name="Chan A.P."/>
            <person name="Thibaud-Nissen F."/>
            <person name="Schobel S."/>
            <person name="Town C.D."/>
        </authorList>
    </citation>
    <scope>GENOME REANNOTATION</scope>
    <source>
        <strain>cv. Columbia</strain>
    </source>
</reference>
<keyword id="KW-0433">Leucine-rich repeat</keyword>
<keyword id="KW-1185">Reference proteome</keyword>
<keyword id="KW-0677">Repeat</keyword>